<evidence type="ECO:0000255" key="1">
    <source>
        <dbReference type="HAMAP-Rule" id="MF_01824"/>
    </source>
</evidence>
<name>PDXS_METST</name>
<protein>
    <recommendedName>
        <fullName evidence="1">Pyridoxal 5'-phosphate synthase subunit PdxS</fullName>
        <shortName evidence="1">PLP synthase subunit PdxS</shortName>
        <ecNumber evidence="1">4.3.3.6</ecNumber>
    </recommendedName>
    <alternativeName>
        <fullName evidence="1">Pdx1</fullName>
    </alternativeName>
</protein>
<organism>
    <name type="scientific">Methanosphaera stadtmanae (strain ATCC 43021 / DSM 3091 / JCM 11832 / MCB-3)</name>
    <dbReference type="NCBI Taxonomy" id="339860"/>
    <lineage>
        <taxon>Archaea</taxon>
        <taxon>Methanobacteriati</taxon>
        <taxon>Methanobacteriota</taxon>
        <taxon>Methanomada group</taxon>
        <taxon>Methanobacteria</taxon>
        <taxon>Methanobacteriales</taxon>
        <taxon>Methanobacteriaceae</taxon>
        <taxon>Methanosphaera</taxon>
    </lineage>
</organism>
<gene>
    <name evidence="1" type="primary">pdxS</name>
    <name type="ordered locus">Msp_0072</name>
</gene>
<keyword id="KW-0456">Lyase</keyword>
<keyword id="KW-0663">Pyridoxal phosphate</keyword>
<keyword id="KW-1185">Reference proteome</keyword>
<keyword id="KW-0704">Schiff base</keyword>
<proteinExistence type="inferred from homology"/>
<sequence length="295" mass="31624">MIHGTKVLKEGFAKMTKGGVIMDVVNAEQAAIAEDAGAVSVMALERVPSDIRKAGGVARMADPSKVIEIMDAVDIPVMAKVRIGHFVEAQVLQSLGVDMIDESEVLTQADEDFHIDKEQFTIPFVCGARDLGEALRRVDEGAAMIRTKGEAGTGNVVEAVRHMRTIQGAIREIENKTEEELWQVAREINAPRELVKLTAEKGRIPVVNFSAGGIATPADAALMMQLGADGVFVGSGIFKSENPELVAKAVVEATAHYEDADLIADVSTDLGAAMPGIDINEIPEEERLQNRGNLI</sequence>
<dbReference type="EC" id="4.3.3.6" evidence="1"/>
<dbReference type="EMBL" id="CP000102">
    <property type="protein sequence ID" value="ABC56491.1"/>
    <property type="molecule type" value="Genomic_DNA"/>
</dbReference>
<dbReference type="RefSeq" id="WP_011405690.1">
    <property type="nucleotide sequence ID" value="NC_007681.1"/>
</dbReference>
<dbReference type="SMR" id="Q2NI73"/>
<dbReference type="STRING" id="339860.Msp_0072"/>
<dbReference type="GeneID" id="41324644"/>
<dbReference type="KEGG" id="mst:Msp_0072"/>
<dbReference type="eggNOG" id="arCOG04075">
    <property type="taxonomic scope" value="Archaea"/>
</dbReference>
<dbReference type="HOGENOM" id="CLU_055352_1_0_2"/>
<dbReference type="UniPathway" id="UPA00245"/>
<dbReference type="Proteomes" id="UP000001931">
    <property type="component" value="Chromosome"/>
</dbReference>
<dbReference type="GO" id="GO:0036381">
    <property type="term" value="F:pyridoxal 5'-phosphate synthase (glutamine hydrolysing) activity"/>
    <property type="evidence" value="ECO:0007669"/>
    <property type="project" value="UniProtKB-UniRule"/>
</dbReference>
<dbReference type="GO" id="GO:0006520">
    <property type="term" value="P:amino acid metabolic process"/>
    <property type="evidence" value="ECO:0007669"/>
    <property type="project" value="TreeGrafter"/>
</dbReference>
<dbReference type="GO" id="GO:0042823">
    <property type="term" value="P:pyridoxal phosphate biosynthetic process"/>
    <property type="evidence" value="ECO:0007669"/>
    <property type="project" value="UniProtKB-UniRule"/>
</dbReference>
<dbReference type="GO" id="GO:0008615">
    <property type="term" value="P:pyridoxine biosynthetic process"/>
    <property type="evidence" value="ECO:0007669"/>
    <property type="project" value="TreeGrafter"/>
</dbReference>
<dbReference type="CDD" id="cd04727">
    <property type="entry name" value="pdxS"/>
    <property type="match status" value="1"/>
</dbReference>
<dbReference type="FunFam" id="3.20.20.70:FF:000001">
    <property type="entry name" value="Pyridoxine biosynthesis protein PDX1"/>
    <property type="match status" value="1"/>
</dbReference>
<dbReference type="Gene3D" id="3.20.20.70">
    <property type="entry name" value="Aldolase class I"/>
    <property type="match status" value="1"/>
</dbReference>
<dbReference type="HAMAP" id="MF_01824">
    <property type="entry name" value="PdxS"/>
    <property type="match status" value="1"/>
</dbReference>
<dbReference type="InterPro" id="IPR013785">
    <property type="entry name" value="Aldolase_TIM"/>
</dbReference>
<dbReference type="InterPro" id="IPR001852">
    <property type="entry name" value="PdxS/SNZ"/>
</dbReference>
<dbReference type="InterPro" id="IPR033755">
    <property type="entry name" value="PdxS/SNZ_N"/>
</dbReference>
<dbReference type="InterPro" id="IPR011060">
    <property type="entry name" value="RibuloseP-bd_barrel"/>
</dbReference>
<dbReference type="NCBIfam" id="NF003215">
    <property type="entry name" value="PRK04180.1"/>
    <property type="match status" value="1"/>
</dbReference>
<dbReference type="NCBIfam" id="TIGR00343">
    <property type="entry name" value="pyridoxal 5'-phosphate synthase lyase subunit PdxS"/>
    <property type="match status" value="1"/>
</dbReference>
<dbReference type="PANTHER" id="PTHR31829">
    <property type="entry name" value="PYRIDOXAL 5'-PHOSPHATE SYNTHASE SUBUNIT SNZ1-RELATED"/>
    <property type="match status" value="1"/>
</dbReference>
<dbReference type="PANTHER" id="PTHR31829:SF0">
    <property type="entry name" value="PYRIDOXAL 5'-PHOSPHATE SYNTHASE SUBUNIT SNZ1-RELATED"/>
    <property type="match status" value="1"/>
</dbReference>
<dbReference type="Pfam" id="PF01680">
    <property type="entry name" value="SOR_SNZ"/>
    <property type="match status" value="1"/>
</dbReference>
<dbReference type="PIRSF" id="PIRSF029271">
    <property type="entry name" value="Pdx1"/>
    <property type="match status" value="1"/>
</dbReference>
<dbReference type="SUPFAM" id="SSF51366">
    <property type="entry name" value="Ribulose-phoshate binding barrel"/>
    <property type="match status" value="1"/>
</dbReference>
<dbReference type="PROSITE" id="PS51129">
    <property type="entry name" value="PDXS_SNZ_2"/>
    <property type="match status" value="1"/>
</dbReference>
<reference key="1">
    <citation type="journal article" date="2006" name="J. Bacteriol.">
        <title>The genome sequence of Methanosphaera stadtmanae reveals why this human intestinal archaeon is restricted to methanol and H2 for methane formation and ATP synthesis.</title>
        <authorList>
            <person name="Fricke W.F."/>
            <person name="Seedorf H."/>
            <person name="Henne A."/>
            <person name="Kruer M."/>
            <person name="Liesegang H."/>
            <person name="Hedderich R."/>
            <person name="Gottschalk G."/>
            <person name="Thauer R.K."/>
        </authorList>
    </citation>
    <scope>NUCLEOTIDE SEQUENCE [LARGE SCALE GENOMIC DNA]</scope>
    <source>
        <strain>ATCC 43021 / DSM 3091 / JCM 11832 / MCB-3</strain>
    </source>
</reference>
<feature type="chain" id="PRO_1000070386" description="Pyridoxal 5'-phosphate synthase subunit PdxS">
    <location>
        <begin position="1"/>
        <end position="295"/>
    </location>
</feature>
<feature type="active site" description="Schiff-base intermediate with D-ribose 5-phosphate" evidence="1">
    <location>
        <position position="80"/>
    </location>
</feature>
<feature type="binding site" evidence="1">
    <location>
        <position position="23"/>
    </location>
    <ligand>
        <name>D-ribose 5-phosphate</name>
        <dbReference type="ChEBI" id="CHEBI:78346"/>
    </ligand>
</feature>
<feature type="binding site" evidence="1">
    <location>
        <position position="152"/>
    </location>
    <ligand>
        <name>D-ribose 5-phosphate</name>
        <dbReference type="ChEBI" id="CHEBI:78346"/>
    </ligand>
</feature>
<feature type="binding site" evidence="1">
    <location>
        <position position="164"/>
    </location>
    <ligand>
        <name>D-glyceraldehyde 3-phosphate</name>
        <dbReference type="ChEBI" id="CHEBI:59776"/>
    </ligand>
</feature>
<feature type="binding site" evidence="1">
    <location>
        <position position="213"/>
    </location>
    <ligand>
        <name>D-ribose 5-phosphate</name>
        <dbReference type="ChEBI" id="CHEBI:78346"/>
    </ligand>
</feature>
<feature type="binding site" evidence="1">
    <location>
        <begin position="234"/>
        <end position="235"/>
    </location>
    <ligand>
        <name>D-ribose 5-phosphate</name>
        <dbReference type="ChEBI" id="CHEBI:78346"/>
    </ligand>
</feature>
<comment type="function">
    <text evidence="1">Catalyzes the formation of pyridoxal 5'-phosphate from ribose 5-phosphate (RBP), glyceraldehyde 3-phosphate (G3P) and ammonia. The ammonia is provided by the PdxT subunit. Can also use ribulose 5-phosphate and dihydroxyacetone phosphate as substrates, resulting from enzyme-catalyzed isomerization of RBP and G3P, respectively.</text>
</comment>
<comment type="catalytic activity">
    <reaction evidence="1">
        <text>aldehydo-D-ribose 5-phosphate + D-glyceraldehyde 3-phosphate + L-glutamine = pyridoxal 5'-phosphate + L-glutamate + phosphate + 3 H2O + H(+)</text>
        <dbReference type="Rhea" id="RHEA:31507"/>
        <dbReference type="ChEBI" id="CHEBI:15377"/>
        <dbReference type="ChEBI" id="CHEBI:15378"/>
        <dbReference type="ChEBI" id="CHEBI:29985"/>
        <dbReference type="ChEBI" id="CHEBI:43474"/>
        <dbReference type="ChEBI" id="CHEBI:58273"/>
        <dbReference type="ChEBI" id="CHEBI:58359"/>
        <dbReference type="ChEBI" id="CHEBI:59776"/>
        <dbReference type="ChEBI" id="CHEBI:597326"/>
        <dbReference type="EC" id="4.3.3.6"/>
    </reaction>
</comment>
<comment type="pathway">
    <text evidence="1">Cofactor biosynthesis; pyridoxal 5'-phosphate biosynthesis.</text>
</comment>
<comment type="subunit">
    <text evidence="1">In the presence of PdxT, forms a dodecamer of heterodimers.</text>
</comment>
<comment type="similarity">
    <text evidence="1">Belongs to the PdxS/SNZ family.</text>
</comment>
<accession>Q2NI73</accession>